<organism>
    <name type="scientific">Escherichia coli O17:K52:H18 (strain UMN026 / ExPEC)</name>
    <dbReference type="NCBI Taxonomy" id="585056"/>
    <lineage>
        <taxon>Bacteria</taxon>
        <taxon>Pseudomonadati</taxon>
        <taxon>Pseudomonadota</taxon>
        <taxon>Gammaproteobacteria</taxon>
        <taxon>Enterobacterales</taxon>
        <taxon>Enterobacteriaceae</taxon>
        <taxon>Escherichia</taxon>
    </lineage>
</organism>
<comment type="catalytic activity">
    <reaction evidence="1">
        <text>D-arabinose 5-phosphate + phosphoenolpyruvate + H2O = 3-deoxy-alpha-D-manno-2-octulosonate-8-phosphate + phosphate</text>
        <dbReference type="Rhea" id="RHEA:14053"/>
        <dbReference type="ChEBI" id="CHEBI:15377"/>
        <dbReference type="ChEBI" id="CHEBI:43474"/>
        <dbReference type="ChEBI" id="CHEBI:57693"/>
        <dbReference type="ChEBI" id="CHEBI:58702"/>
        <dbReference type="ChEBI" id="CHEBI:85985"/>
        <dbReference type="EC" id="2.5.1.55"/>
    </reaction>
</comment>
<comment type="pathway">
    <text evidence="1">Carbohydrate biosynthesis; 3-deoxy-D-manno-octulosonate biosynthesis; 3-deoxy-D-manno-octulosonate from D-ribulose 5-phosphate: step 2/3.</text>
</comment>
<comment type="pathway">
    <text evidence="1">Bacterial outer membrane biogenesis; lipopolysaccharide biosynthesis.</text>
</comment>
<comment type="subcellular location">
    <subcellularLocation>
        <location evidence="1">Cytoplasm</location>
    </subcellularLocation>
</comment>
<comment type="similarity">
    <text evidence="1">Belongs to the KdsA family.</text>
</comment>
<gene>
    <name evidence="1" type="primary">kdsA</name>
    <name type="ordered locus">ECUMN_1512</name>
</gene>
<evidence type="ECO:0000255" key="1">
    <source>
        <dbReference type="HAMAP-Rule" id="MF_00056"/>
    </source>
</evidence>
<sequence>MKQKVVSIGDINVANDLPFVLFGGMNVLESRDLAMRICEHYVTVTQKLGIPYVFKASFDKANRSSIHSYRGPGLEEGMKIFQELKQTFGVKIITDVHEPSQAQPVADVVDVIQLPAFLARQTDLVEAMAKTGAVINVKKPQFVSPGQMGNIVDKFKEGGNEKVILCDRGANFGYDNLVVDMLGFSIMKKVSGNSPVIFDVTHALQCRDPFGAASGGRRAQVAELARAGMAVGLAGLFIEAHPDPEHAKCDGPSALPLAKLEPFLKQMKAIDDLVKGFEELDTSK</sequence>
<accession>B7N426</accession>
<keyword id="KW-0963">Cytoplasm</keyword>
<keyword id="KW-0448">Lipopolysaccharide biosynthesis</keyword>
<keyword id="KW-0808">Transferase</keyword>
<proteinExistence type="inferred from homology"/>
<dbReference type="EC" id="2.5.1.55" evidence="1"/>
<dbReference type="EMBL" id="CU928163">
    <property type="protein sequence ID" value="CAR12719.1"/>
    <property type="molecule type" value="Genomic_DNA"/>
</dbReference>
<dbReference type="RefSeq" id="WP_000811065.1">
    <property type="nucleotide sequence ID" value="NC_011751.1"/>
</dbReference>
<dbReference type="RefSeq" id="YP_002412256.1">
    <property type="nucleotide sequence ID" value="NC_011751.1"/>
</dbReference>
<dbReference type="SMR" id="B7N426"/>
<dbReference type="STRING" id="585056.ECUMN_1512"/>
<dbReference type="GeneID" id="75203328"/>
<dbReference type="KEGG" id="eum:ECUMN_1512"/>
<dbReference type="PATRIC" id="fig|585056.7.peg.1710"/>
<dbReference type="HOGENOM" id="CLU_036666_0_0_6"/>
<dbReference type="UniPathway" id="UPA00030"/>
<dbReference type="UniPathway" id="UPA00357">
    <property type="reaction ID" value="UER00474"/>
</dbReference>
<dbReference type="Proteomes" id="UP000007097">
    <property type="component" value="Chromosome"/>
</dbReference>
<dbReference type="GO" id="GO:0005737">
    <property type="term" value="C:cytoplasm"/>
    <property type="evidence" value="ECO:0007669"/>
    <property type="project" value="UniProtKB-SubCell"/>
</dbReference>
<dbReference type="GO" id="GO:0008676">
    <property type="term" value="F:3-deoxy-8-phosphooctulonate synthase activity"/>
    <property type="evidence" value="ECO:0007669"/>
    <property type="project" value="UniProtKB-UniRule"/>
</dbReference>
<dbReference type="GO" id="GO:0019294">
    <property type="term" value="P:keto-3-deoxy-D-manno-octulosonic acid biosynthetic process"/>
    <property type="evidence" value="ECO:0007669"/>
    <property type="project" value="UniProtKB-UniRule"/>
</dbReference>
<dbReference type="FunFam" id="3.20.20.70:FF:000058">
    <property type="entry name" value="2-dehydro-3-deoxyphosphooctonate aldolase"/>
    <property type="match status" value="1"/>
</dbReference>
<dbReference type="Gene3D" id="3.20.20.70">
    <property type="entry name" value="Aldolase class I"/>
    <property type="match status" value="1"/>
</dbReference>
<dbReference type="HAMAP" id="MF_00056">
    <property type="entry name" value="KDO8P_synth"/>
    <property type="match status" value="1"/>
</dbReference>
<dbReference type="InterPro" id="IPR013785">
    <property type="entry name" value="Aldolase_TIM"/>
</dbReference>
<dbReference type="InterPro" id="IPR006218">
    <property type="entry name" value="DAHP1/KDSA"/>
</dbReference>
<dbReference type="InterPro" id="IPR006269">
    <property type="entry name" value="KDO8P_synthase"/>
</dbReference>
<dbReference type="NCBIfam" id="TIGR01362">
    <property type="entry name" value="KDO8P_synth"/>
    <property type="match status" value="1"/>
</dbReference>
<dbReference type="NCBIfam" id="NF003543">
    <property type="entry name" value="PRK05198.1"/>
    <property type="match status" value="1"/>
</dbReference>
<dbReference type="NCBIfam" id="NF009109">
    <property type="entry name" value="PRK12457.1"/>
    <property type="match status" value="1"/>
</dbReference>
<dbReference type="PANTHER" id="PTHR21057">
    <property type="entry name" value="PHOSPHO-2-DEHYDRO-3-DEOXYHEPTONATE ALDOLASE"/>
    <property type="match status" value="1"/>
</dbReference>
<dbReference type="Pfam" id="PF00793">
    <property type="entry name" value="DAHP_synth_1"/>
    <property type="match status" value="1"/>
</dbReference>
<dbReference type="SUPFAM" id="SSF51569">
    <property type="entry name" value="Aldolase"/>
    <property type="match status" value="1"/>
</dbReference>
<reference key="1">
    <citation type="journal article" date="2009" name="PLoS Genet.">
        <title>Organised genome dynamics in the Escherichia coli species results in highly diverse adaptive paths.</title>
        <authorList>
            <person name="Touchon M."/>
            <person name="Hoede C."/>
            <person name="Tenaillon O."/>
            <person name="Barbe V."/>
            <person name="Baeriswyl S."/>
            <person name="Bidet P."/>
            <person name="Bingen E."/>
            <person name="Bonacorsi S."/>
            <person name="Bouchier C."/>
            <person name="Bouvet O."/>
            <person name="Calteau A."/>
            <person name="Chiapello H."/>
            <person name="Clermont O."/>
            <person name="Cruveiller S."/>
            <person name="Danchin A."/>
            <person name="Diard M."/>
            <person name="Dossat C."/>
            <person name="Karoui M.E."/>
            <person name="Frapy E."/>
            <person name="Garry L."/>
            <person name="Ghigo J.M."/>
            <person name="Gilles A.M."/>
            <person name="Johnson J."/>
            <person name="Le Bouguenec C."/>
            <person name="Lescat M."/>
            <person name="Mangenot S."/>
            <person name="Martinez-Jehanne V."/>
            <person name="Matic I."/>
            <person name="Nassif X."/>
            <person name="Oztas S."/>
            <person name="Petit M.A."/>
            <person name="Pichon C."/>
            <person name="Rouy Z."/>
            <person name="Ruf C.S."/>
            <person name="Schneider D."/>
            <person name="Tourret J."/>
            <person name="Vacherie B."/>
            <person name="Vallenet D."/>
            <person name="Medigue C."/>
            <person name="Rocha E.P.C."/>
            <person name="Denamur E."/>
        </authorList>
    </citation>
    <scope>NUCLEOTIDE SEQUENCE [LARGE SCALE GENOMIC DNA]</scope>
    <source>
        <strain>UMN026 / ExPEC</strain>
    </source>
</reference>
<name>KDSA_ECOLU</name>
<feature type="chain" id="PRO_1000116879" description="2-dehydro-3-deoxyphosphooctonate aldolase">
    <location>
        <begin position="1"/>
        <end position="284"/>
    </location>
</feature>
<protein>
    <recommendedName>
        <fullName evidence="1">2-dehydro-3-deoxyphosphooctonate aldolase</fullName>
        <ecNumber evidence="1">2.5.1.55</ecNumber>
    </recommendedName>
    <alternativeName>
        <fullName evidence="1">3-deoxy-D-manno-octulosonic acid 8-phosphate synthase</fullName>
    </alternativeName>
    <alternativeName>
        <fullName evidence="1">KDO-8-phosphate synthase</fullName>
        <shortName evidence="1">KDO 8-P synthase</shortName>
        <shortName evidence="1">KDOPS</shortName>
    </alternativeName>
    <alternativeName>
        <fullName evidence="1">Phospho-2-dehydro-3-deoxyoctonate aldolase</fullName>
    </alternativeName>
</protein>